<keyword id="KW-0627">Porphyrin biosynthesis</keyword>
<keyword id="KW-0808">Transferase</keyword>
<name>HEM3_CLOBL</name>
<proteinExistence type="inferred from homology"/>
<organism>
    <name type="scientific">Clostridium botulinum (strain Langeland / NCTC 10281 / Type F)</name>
    <dbReference type="NCBI Taxonomy" id="441772"/>
    <lineage>
        <taxon>Bacteria</taxon>
        <taxon>Bacillati</taxon>
        <taxon>Bacillota</taxon>
        <taxon>Clostridia</taxon>
        <taxon>Eubacteriales</taxon>
        <taxon>Clostridiaceae</taxon>
        <taxon>Clostridium</taxon>
    </lineage>
</organism>
<accession>A7GBW3</accession>
<protein>
    <recommendedName>
        <fullName evidence="1">Porphobilinogen deaminase</fullName>
        <shortName evidence="1">PBG</shortName>
        <ecNumber evidence="1">2.5.1.61</ecNumber>
    </recommendedName>
    <alternativeName>
        <fullName evidence="1">Hydroxymethylbilane synthase</fullName>
        <shortName evidence="1">HMBS</shortName>
    </alternativeName>
    <alternativeName>
        <fullName evidence="1">Pre-uroporphyrinogen synthase</fullName>
    </alternativeName>
</protein>
<evidence type="ECO:0000255" key="1">
    <source>
        <dbReference type="HAMAP-Rule" id="MF_00260"/>
    </source>
</evidence>
<comment type="function">
    <text evidence="1">Tetrapolymerization of the monopyrrole PBG into the hydroxymethylbilane pre-uroporphyrinogen in several discrete steps.</text>
</comment>
<comment type="catalytic activity">
    <reaction evidence="1">
        <text>4 porphobilinogen + H2O = hydroxymethylbilane + 4 NH4(+)</text>
        <dbReference type="Rhea" id="RHEA:13185"/>
        <dbReference type="ChEBI" id="CHEBI:15377"/>
        <dbReference type="ChEBI" id="CHEBI:28938"/>
        <dbReference type="ChEBI" id="CHEBI:57845"/>
        <dbReference type="ChEBI" id="CHEBI:58126"/>
        <dbReference type="EC" id="2.5.1.61"/>
    </reaction>
</comment>
<comment type="cofactor">
    <cofactor evidence="1">
        <name>dipyrromethane</name>
        <dbReference type="ChEBI" id="CHEBI:60342"/>
    </cofactor>
    <text evidence="1">Binds 1 dipyrromethane group covalently.</text>
</comment>
<comment type="pathway">
    <text evidence="1">Porphyrin-containing compound metabolism; protoporphyrin-IX biosynthesis; coproporphyrinogen-III from 5-aminolevulinate: step 2/4.</text>
</comment>
<comment type="subunit">
    <text evidence="1">Monomer.</text>
</comment>
<comment type="miscellaneous">
    <text evidence="1">The porphobilinogen subunits are added to the dipyrromethane group.</text>
</comment>
<comment type="similarity">
    <text evidence="1">Belongs to the HMBS family.</text>
</comment>
<feature type="chain" id="PRO_1000047746" description="Porphobilinogen deaminase">
    <location>
        <begin position="1"/>
        <end position="290"/>
    </location>
</feature>
<feature type="modified residue" description="S-(dipyrrolylmethanemethyl)cysteine" evidence="1">
    <location>
        <position position="237"/>
    </location>
</feature>
<gene>
    <name evidence="1" type="primary">hemC</name>
    <name type="ordered locus">CLI_1007</name>
</gene>
<dbReference type="EC" id="2.5.1.61" evidence="1"/>
<dbReference type="EMBL" id="CP000728">
    <property type="protein sequence ID" value="ABS41174.1"/>
    <property type="molecule type" value="Genomic_DNA"/>
</dbReference>
<dbReference type="RefSeq" id="WP_011987845.1">
    <property type="nucleotide sequence ID" value="NC_009699.1"/>
</dbReference>
<dbReference type="SMR" id="A7GBW3"/>
<dbReference type="KEGG" id="cbf:CLI_1007"/>
<dbReference type="HOGENOM" id="CLU_019704_0_2_9"/>
<dbReference type="UniPathway" id="UPA00251">
    <property type="reaction ID" value="UER00319"/>
</dbReference>
<dbReference type="Proteomes" id="UP000002410">
    <property type="component" value="Chromosome"/>
</dbReference>
<dbReference type="GO" id="GO:0005737">
    <property type="term" value="C:cytoplasm"/>
    <property type="evidence" value="ECO:0007669"/>
    <property type="project" value="TreeGrafter"/>
</dbReference>
<dbReference type="GO" id="GO:0004418">
    <property type="term" value="F:hydroxymethylbilane synthase activity"/>
    <property type="evidence" value="ECO:0007669"/>
    <property type="project" value="UniProtKB-UniRule"/>
</dbReference>
<dbReference type="GO" id="GO:0006782">
    <property type="term" value="P:protoporphyrinogen IX biosynthetic process"/>
    <property type="evidence" value="ECO:0007669"/>
    <property type="project" value="UniProtKB-UniRule"/>
</dbReference>
<dbReference type="FunFam" id="3.40.190.10:FF:000005">
    <property type="entry name" value="Porphobilinogen deaminase"/>
    <property type="match status" value="1"/>
</dbReference>
<dbReference type="Gene3D" id="3.40.190.10">
    <property type="entry name" value="Periplasmic binding protein-like II"/>
    <property type="match status" value="2"/>
</dbReference>
<dbReference type="Gene3D" id="3.30.160.40">
    <property type="entry name" value="Porphobilinogen deaminase, C-terminal domain"/>
    <property type="match status" value="1"/>
</dbReference>
<dbReference type="HAMAP" id="MF_00260">
    <property type="entry name" value="Porphobil_deam"/>
    <property type="match status" value="1"/>
</dbReference>
<dbReference type="InterPro" id="IPR000860">
    <property type="entry name" value="HemC"/>
</dbReference>
<dbReference type="InterPro" id="IPR022417">
    <property type="entry name" value="Porphobilin_deaminase_N"/>
</dbReference>
<dbReference type="InterPro" id="IPR022418">
    <property type="entry name" value="Porphobilinogen_deaminase_C"/>
</dbReference>
<dbReference type="InterPro" id="IPR036803">
    <property type="entry name" value="Porphobilinogen_deaminase_C_sf"/>
</dbReference>
<dbReference type="NCBIfam" id="TIGR00212">
    <property type="entry name" value="hemC"/>
    <property type="match status" value="1"/>
</dbReference>
<dbReference type="PANTHER" id="PTHR11557">
    <property type="entry name" value="PORPHOBILINOGEN DEAMINASE"/>
    <property type="match status" value="1"/>
</dbReference>
<dbReference type="PANTHER" id="PTHR11557:SF0">
    <property type="entry name" value="PORPHOBILINOGEN DEAMINASE"/>
    <property type="match status" value="1"/>
</dbReference>
<dbReference type="Pfam" id="PF01379">
    <property type="entry name" value="Porphobil_deam"/>
    <property type="match status" value="1"/>
</dbReference>
<dbReference type="Pfam" id="PF03900">
    <property type="entry name" value="Porphobil_deamC"/>
    <property type="match status" value="1"/>
</dbReference>
<dbReference type="PIRSF" id="PIRSF001438">
    <property type="entry name" value="4pyrrol_synth_OHMeBilane_synth"/>
    <property type="match status" value="1"/>
</dbReference>
<dbReference type="PRINTS" id="PR00151">
    <property type="entry name" value="PORPHBDMNASE"/>
</dbReference>
<dbReference type="SUPFAM" id="SSF53850">
    <property type="entry name" value="Periplasmic binding protein-like II"/>
    <property type="match status" value="1"/>
</dbReference>
<dbReference type="SUPFAM" id="SSF54782">
    <property type="entry name" value="Porphobilinogen deaminase (hydroxymethylbilane synthase), C-terminal domain"/>
    <property type="match status" value="1"/>
</dbReference>
<sequence length="290" mass="32849">MNFIIATRRSKLAQVQTEIIIDLLNKKHDIECEKLLIETVGDKILEVSLDKIGGKGLFVKDIEVAMLEQRADAAVHSMKDVPYEMPKGFEIIAIPKREDVRDAFISLDNIKFKDLRKGAKIGTSSRRRAAQLKLLRPDLDIVPIRGNVQTRIEKIKKENLDGIILAVAGLKRVNLEHLITDYFDTKEMVPAIGQGALGIEVMEEHPKKELFKDLDHYNSKICVLAERAFMRELDGDCHSTIGAYASIKDNIMHIIGIFERKNKIIKKEITGTKDQYEKLGIALAEHILKD</sequence>
<reference key="1">
    <citation type="submission" date="2007-06" db="EMBL/GenBank/DDBJ databases">
        <authorList>
            <person name="Brinkac L.M."/>
            <person name="Daugherty S."/>
            <person name="Dodson R.J."/>
            <person name="Madupu R."/>
            <person name="Brown J.L."/>
            <person name="Bruce D."/>
            <person name="Detter C."/>
            <person name="Munk C."/>
            <person name="Smith L.A."/>
            <person name="Smith T.J."/>
            <person name="White O."/>
            <person name="Brettin T.S."/>
        </authorList>
    </citation>
    <scope>NUCLEOTIDE SEQUENCE [LARGE SCALE GENOMIC DNA]</scope>
    <source>
        <strain>Langeland / NCTC 10281 / Type F</strain>
    </source>
</reference>